<proteinExistence type="evidence at protein level"/>
<comment type="function">
    <text evidence="1">Endo-beta-galactosidase capable of releasing both the blood group A trisaccharide (A-Tri; GalNAcalpha1--&gt;3(Fucalpha1--&gt;2)Gal) and B trisaccharide (B-Tri; Galalpha1--&gt;3(Fucalpha1--&gt;2)Gal) glycotopes from blood group A- and B-containing glycoconjugates, respectively.</text>
</comment>
<comment type="catalytic activity">
    <reaction evidence="1">
        <text>Endohydrolysis of (1-&gt;4)-beta-D-galactosidic linkages in blood group A and B substances.</text>
        <dbReference type="EC" id="3.2.1.102"/>
    </reaction>
</comment>
<comment type="subcellular location">
    <subcellularLocation>
        <location evidence="2">Secreted</location>
    </subcellularLocation>
</comment>
<comment type="similarity">
    <text evidence="2">Belongs to the glycosyl hydrolase 98 family.</text>
</comment>
<protein>
    <recommendedName>
        <fullName>Blood-group-substance endo-1,4-beta-galactosidase</fullName>
        <shortName>E-ABase</shortName>
        <ecNumber>3.2.1.102</ecNumber>
    </recommendedName>
    <alternativeName>
        <fullName>Blood group A-and B-cleaving endo-beta-galactosidase</fullName>
    </alternativeName>
</protein>
<evidence type="ECO:0000269" key="1">
    <source>
    </source>
</evidence>
<evidence type="ECO:0000305" key="2"/>
<dbReference type="EC" id="3.2.1.102"/>
<dbReference type="EMBL" id="AY492085">
    <property type="protein sequence ID" value="AAR84225.1"/>
    <property type="molecule type" value="Genomic_DNA"/>
</dbReference>
<dbReference type="SMR" id="Q6RUF5"/>
<dbReference type="CAZy" id="CBM51">
    <property type="family name" value="Carbohydrate-Binding Module Family 51"/>
</dbReference>
<dbReference type="CAZy" id="GH98">
    <property type="family name" value="Glycoside Hydrolase Family 98"/>
</dbReference>
<dbReference type="BioCyc" id="MetaCyc:MONOMER-20296"/>
<dbReference type="BRENDA" id="3.2.1.102">
    <property type="organism ID" value="1503"/>
</dbReference>
<dbReference type="GO" id="GO:0005576">
    <property type="term" value="C:extracellular region"/>
    <property type="evidence" value="ECO:0007669"/>
    <property type="project" value="UniProtKB-SubCell"/>
</dbReference>
<dbReference type="GO" id="GO:0033929">
    <property type="term" value="F:blood-group-substance endo-1,4-beta-galactosidase activity"/>
    <property type="evidence" value="ECO:0000314"/>
    <property type="project" value="UniProtKB"/>
</dbReference>
<dbReference type="GO" id="GO:0005975">
    <property type="term" value="P:carbohydrate metabolic process"/>
    <property type="evidence" value="ECO:0000314"/>
    <property type="project" value="UniProtKB"/>
</dbReference>
<dbReference type="Gene3D" id="3.30.2330.20">
    <property type="entry name" value="family 98 glycoside hydrolase"/>
    <property type="match status" value="1"/>
</dbReference>
<dbReference type="Gene3D" id="3.20.20.80">
    <property type="entry name" value="Glycosidases"/>
    <property type="match status" value="1"/>
</dbReference>
<dbReference type="Gene3D" id="2.60.120.1060">
    <property type="entry name" value="NPCBM/NEW2 domain"/>
    <property type="match status" value="1"/>
</dbReference>
<dbReference type="Gene3D" id="2.60.220.10">
    <property type="entry name" value="Polysaccharide lyase family 8-like, C-terminal"/>
    <property type="match status" value="1"/>
</dbReference>
<dbReference type="InterPro" id="IPR008979">
    <property type="entry name" value="Galactose-bd-like_sf"/>
</dbReference>
<dbReference type="InterPro" id="IPR013190">
    <property type="entry name" value="GH98_C"/>
</dbReference>
<dbReference type="InterPro" id="IPR013191">
    <property type="entry name" value="GH98_central"/>
</dbReference>
<dbReference type="InterPro" id="IPR013222">
    <property type="entry name" value="Glyco_hyd_98_carb-bd"/>
</dbReference>
<dbReference type="InterPro" id="IPR011071">
    <property type="entry name" value="Lyase_8-like_C"/>
</dbReference>
<dbReference type="InterPro" id="IPR038637">
    <property type="entry name" value="NPCBM_sf"/>
</dbReference>
<dbReference type="Pfam" id="PF08307">
    <property type="entry name" value="Glyco_hydro_98C"/>
    <property type="match status" value="1"/>
</dbReference>
<dbReference type="Pfam" id="PF08306">
    <property type="entry name" value="Glyco_hydro_98M"/>
    <property type="match status" value="1"/>
</dbReference>
<dbReference type="Pfam" id="PF08305">
    <property type="entry name" value="NPCBM"/>
    <property type="match status" value="1"/>
</dbReference>
<dbReference type="SMART" id="SM00776">
    <property type="entry name" value="NPCBM"/>
    <property type="match status" value="1"/>
</dbReference>
<dbReference type="SUPFAM" id="SSF49785">
    <property type="entry name" value="Galactose-binding domain-like"/>
    <property type="match status" value="1"/>
</dbReference>
<sequence>MGGVTMKNNLKKYIKYILSVILVFFVGVNGMEVYALEESRDVYLSDLDWLNATHGDDTKSKIVQKNHPFTPGNNNQSTKISLKMEDGSISEFEKGLGTIAGSPSTITYDISGAGVTKFFSYLGIDRSANPINEQYAKVDKIEVVVDGKVIYSTINQFPNGLTYETPAIKVDLNIPENAKRLQLKSYAGEKTWGDEVVYADAKFTAKGDFVNPNDWTPAEKRREISNEKPLLMIPLYANGSKYEKGDYAFWGDDTLVGKWKEVPDDLKPYTVIQLHPDDLPKRDGVAADFYEHMLNEAQSYVNPKTNKNEPIPIVLTVYTAGNVPGYTAAHWLTTEWIEDMYSKYSALQGVFSTENYWVWTDNVESNAAEYLKLSAKYGGYFIWSEQNNGGSIEKAFGSNGKTVFKEAVEKYWENFIFMYKNTPQAEGNDAPTSSYMTGLWLTDYAYQWGGLMDTWKWYETGKWKLFESGNIGKTQGNRQWLTEPEALLGIEAMNIYLNGGCVYNFEHPAYTYGVRNEESPLFSNVIKEFFRYVINNPSPSKNEMRAKTKSLLYGNFTQNGNGNYFVGLNTEMSQSPAYTTGRYGNIPAVPSSIERNKIESRLSGSQIKLIDMNSSELSNITNRKEYFNKLYKEEYNGNIFAQKLDNRWFIYNYKYNENINQKGSFDIANIKSEVTLEPHTYLIMEDNNQSINIKLNNYRTNKDSLWEGAKNADEAKKLPEMSKVDALNWVYDSYIKNTNNGEKRTSVIKLMNIDKAPTITNVNGIEGSYDIPTVKYNSETRSAEITIKNNGNIDFDIVIK</sequence>
<name>EABC_CLOPF</name>
<feature type="signal peptide" evidence="1">
    <location>
        <begin position="1"/>
        <end position="35"/>
    </location>
</feature>
<feature type="chain" id="PRO_0000430456" description="Blood-group-substance endo-1,4-beta-galactosidase">
    <location>
        <begin position="36"/>
        <end position="800"/>
    </location>
</feature>
<keyword id="KW-0119">Carbohydrate metabolism</keyword>
<keyword id="KW-0903">Direct protein sequencing</keyword>
<keyword id="KW-0326">Glycosidase</keyword>
<keyword id="KW-0378">Hydrolase</keyword>
<keyword id="KW-0964">Secreted</keyword>
<keyword id="KW-0732">Signal</keyword>
<organism>
    <name type="scientific">Clostridium perfringens</name>
    <dbReference type="NCBI Taxonomy" id="1502"/>
    <lineage>
        <taxon>Bacteria</taxon>
        <taxon>Bacillati</taxon>
        <taxon>Bacillota</taxon>
        <taxon>Clostridia</taxon>
        <taxon>Eubacteriales</taxon>
        <taxon>Clostridiaceae</taxon>
        <taxon>Clostridium</taxon>
    </lineage>
</organism>
<gene>
    <name type="primary">eabC</name>
</gene>
<reference key="1">
    <citation type="journal article" date="2005" name="J. Biol. Chem.">
        <title>A clostridial endo-beta-galactosidase that cleaves both blood group A and B glycotopes: the first member of a new glycoside hydrolase family, GH98.</title>
        <authorList>
            <person name="Anderson K.M."/>
            <person name="Ashida H."/>
            <person name="Maskos K."/>
            <person name="Dell A."/>
            <person name="Li S.C."/>
            <person name="Li Y.T."/>
        </authorList>
    </citation>
    <scope>NUCLEOTIDE SEQUENCE [GENOMIC DNA]</scope>
    <scope>PROTEIN SEQUENCE OF 36-59; 293-304; 544-554 AND 572-589</scope>
    <scope>FUNCTION</scope>
    <scope>CATALYTIC ACTIVITY</scope>
    <source>
        <strain>ATCC 10543</strain>
    </source>
</reference>
<reference key="2">
    <citation type="journal article" date="2014" name="PLoS ONE">
        <title>Finding sequences for over 270 orphan enzymes.</title>
        <authorList>
            <person name="Shearer A.G."/>
            <person name="Altman T."/>
            <person name="Rhee C.D."/>
        </authorList>
    </citation>
    <scope>IDENTIFICATION</scope>
</reference>
<accession>Q6RUF5</accession>